<organism>
    <name type="scientific">Homo sapiens</name>
    <name type="common">Human</name>
    <dbReference type="NCBI Taxonomy" id="9606"/>
    <lineage>
        <taxon>Eukaryota</taxon>
        <taxon>Metazoa</taxon>
        <taxon>Chordata</taxon>
        <taxon>Craniata</taxon>
        <taxon>Vertebrata</taxon>
        <taxon>Euteleostomi</taxon>
        <taxon>Mammalia</taxon>
        <taxon>Eutheria</taxon>
        <taxon>Euarchontoglires</taxon>
        <taxon>Primates</taxon>
        <taxon>Haplorrhini</taxon>
        <taxon>Catarrhini</taxon>
        <taxon>Hominidae</taxon>
        <taxon>Homo</taxon>
    </lineage>
</organism>
<feature type="chain" id="PRO_0000342655" description="Putative protein SPATA31J1">
    <location>
        <begin position="1"/>
        <end position="353"/>
    </location>
</feature>
<feature type="transmembrane region" description="Helical" evidence="1">
    <location>
        <begin position="34"/>
        <end position="54"/>
    </location>
</feature>
<feature type="region of interest" description="Disordered" evidence="2">
    <location>
        <begin position="122"/>
        <end position="271"/>
    </location>
</feature>
<feature type="compositionally biased region" description="Low complexity" evidence="2">
    <location>
        <begin position="182"/>
        <end position="195"/>
    </location>
</feature>
<feature type="compositionally biased region" description="Polar residues" evidence="2">
    <location>
        <begin position="211"/>
        <end position="221"/>
    </location>
</feature>
<feature type="compositionally biased region" description="Low complexity" evidence="2">
    <location>
        <begin position="222"/>
        <end position="237"/>
    </location>
</feature>
<feature type="compositionally biased region" description="Basic residues" evidence="2">
    <location>
        <begin position="244"/>
        <end position="262"/>
    </location>
</feature>
<feature type="splice variant" id="VSP_034519" description="In isoform 2." evidence="4">
    <original>YLSSLSSSQPPEPLRPLKHPSHKPRGRSLPRRRNPGWVSWSDSMQADSETDTI</original>
    <variation>LPSRETPHAGRWRQGSRFPQPGCANAAGRIRHQNPRHSHGHRISDIHEQLGIS</variation>
    <location>
        <begin position="229"/>
        <end position="281"/>
    </location>
</feature>
<feature type="splice variant" id="VSP_041195" description="In isoform 4." evidence="4">
    <original>YLSSLSSSQPPEPLRPLKHPSHKPRGRSLPRRRNPGWVSWSDSMQADSE</original>
    <variation>ETPHAGRWRQGSRFPQPGCANAAGRIRHQNPRHSHGHRISDIHEQLGIS</variation>
    <location>
        <begin position="229"/>
        <end position="277"/>
    </location>
</feature>
<feature type="splice variant" id="VSP_038832" description="In isoform 3." evidence="4">
    <original>YLSSLSSSQ</original>
    <variation>LDVPTLLDA</variation>
    <location>
        <begin position="229"/>
        <end position="237"/>
    </location>
</feature>
<feature type="splice variant" id="VSP_038833" description="In isoform 3." evidence="4">
    <location>
        <begin position="238"/>
        <end position="353"/>
    </location>
</feature>
<feature type="splice variant" id="VSP_041196" description="In isoform 4." evidence="4">
    <location>
        <begin position="278"/>
        <end position="353"/>
    </location>
</feature>
<feature type="splice variant" id="VSP_034520" description="In isoform 2." evidence="4">
    <location>
        <begin position="282"/>
        <end position="353"/>
    </location>
</feature>
<feature type="sequence variant" id="VAR_044323" description="In dbSNP:rs1319931.">
    <original>R</original>
    <variation>C</variation>
    <location>
        <position position="55"/>
    </location>
</feature>
<feature type="sequence variant" id="VAR_044324" description="In dbSNP:rs13168357.">
    <original>L</original>
    <variation>P</variation>
    <location>
        <position position="56"/>
    </location>
</feature>
<feature type="sequence variant" id="VAR_062961" evidence="3">
    <location>
        <position position="70"/>
    </location>
</feature>
<reference key="1">
    <citation type="journal article" date="2004" name="Nature">
        <title>The DNA sequence and comparative analysis of human chromosome 5.</title>
        <authorList>
            <person name="Schmutz J."/>
            <person name="Martin J."/>
            <person name="Terry A."/>
            <person name="Couronne O."/>
            <person name="Grimwood J."/>
            <person name="Lowry S."/>
            <person name="Gordon L.A."/>
            <person name="Scott D."/>
            <person name="Xie G."/>
            <person name="Huang W."/>
            <person name="Hellsten U."/>
            <person name="Tran-Gyamfi M."/>
            <person name="She X."/>
            <person name="Prabhakar S."/>
            <person name="Aerts A."/>
            <person name="Altherr M."/>
            <person name="Bajorek E."/>
            <person name="Black S."/>
            <person name="Branscomb E."/>
            <person name="Caoile C."/>
            <person name="Challacombe J.F."/>
            <person name="Chan Y.M."/>
            <person name="Denys M."/>
            <person name="Detter J.C."/>
            <person name="Escobar J."/>
            <person name="Flowers D."/>
            <person name="Fotopulos D."/>
            <person name="Glavina T."/>
            <person name="Gomez M."/>
            <person name="Gonzales E."/>
            <person name="Goodstein D."/>
            <person name="Grigoriev I."/>
            <person name="Groza M."/>
            <person name="Hammon N."/>
            <person name="Hawkins T."/>
            <person name="Haydu L."/>
            <person name="Israni S."/>
            <person name="Jett J."/>
            <person name="Kadner K."/>
            <person name="Kimball H."/>
            <person name="Kobayashi A."/>
            <person name="Lopez F."/>
            <person name="Lou Y."/>
            <person name="Martinez D."/>
            <person name="Medina C."/>
            <person name="Morgan J."/>
            <person name="Nandkeshwar R."/>
            <person name="Noonan J.P."/>
            <person name="Pitluck S."/>
            <person name="Pollard M."/>
            <person name="Predki P."/>
            <person name="Priest J."/>
            <person name="Ramirez L."/>
            <person name="Retterer J."/>
            <person name="Rodriguez A."/>
            <person name="Rogers S."/>
            <person name="Salamov A."/>
            <person name="Salazar A."/>
            <person name="Thayer N."/>
            <person name="Tice H."/>
            <person name="Tsai M."/>
            <person name="Ustaszewska A."/>
            <person name="Vo N."/>
            <person name="Wheeler J."/>
            <person name="Wu K."/>
            <person name="Yang J."/>
            <person name="Dickson M."/>
            <person name="Cheng J.-F."/>
            <person name="Eichler E.E."/>
            <person name="Olsen A."/>
            <person name="Pennacchio L.A."/>
            <person name="Rokhsar D.S."/>
            <person name="Richardson P."/>
            <person name="Lucas S.M."/>
            <person name="Myers R.M."/>
            <person name="Rubin E.M."/>
        </authorList>
    </citation>
    <scope>NUCLEOTIDE SEQUENCE [LARGE SCALE GENOMIC DNA]</scope>
</reference>
<reference key="2">
    <citation type="journal article" date="2004" name="Genome Res.">
        <title>The status, quality, and expansion of the NIH full-length cDNA project: the Mammalian Gene Collection (MGC).</title>
        <authorList>
            <consortium name="The MGC Project Team"/>
        </authorList>
    </citation>
    <scope>NUCLEOTIDE SEQUENCE [LARGE SCALE MRNA] (ISOFORMS 2; 3 AND 4)</scope>
    <scope>VARIANT GLU-70 DEL</scope>
</reference>
<proteinExistence type="uncertain"/>
<gene>
    <name evidence="6" type="primary">SPATA31J1</name>
    <name evidence="6" type="synonym">C5orf60</name>
</gene>
<name>S31J1_HUMAN</name>
<accession>A6NFR6</accession>
<accession>A1L488</accession>
<accession>B7ZM52</accession>
<accession>B7ZM53</accession>
<comment type="interaction">
    <interactant intactId="EBI-10173955">
        <id>A6NFR6-4</id>
    </interactant>
    <interactant intactId="EBI-10172181">
        <id>Q53SE7</id>
        <label>FLJ13057</label>
    </interactant>
    <organismsDiffer>false</organismsDiffer>
    <experiments>3</experiments>
</comment>
<comment type="interaction">
    <interactant intactId="EBI-10173955">
        <id>A6NFR6-4</id>
    </interactant>
    <interactant intactId="EBI-948001">
        <id>Q15323</id>
        <label>KRT31</label>
    </interactant>
    <organismsDiffer>false</organismsDiffer>
    <experiments>3</experiments>
</comment>
<comment type="interaction">
    <interactant intactId="EBI-10173955">
        <id>A6NFR6-4</id>
    </interactant>
    <interactant intactId="EBI-10171697">
        <id>Q6A162</id>
        <label>KRT40</label>
    </interactant>
    <organismsDiffer>false</organismsDiffer>
    <experiments>3</experiments>
</comment>
<comment type="interaction">
    <interactant intactId="EBI-10173955">
        <id>A6NFR6-4</id>
    </interactant>
    <interactant intactId="EBI-10172052">
        <id>P60411</id>
        <label>KRTAP10-9</label>
    </interactant>
    <organismsDiffer>false</organismsDiffer>
    <experiments>3</experiments>
</comment>
<comment type="interaction">
    <interactant intactId="EBI-10173955">
        <id>A6NFR6-4</id>
    </interactant>
    <interactant intactId="EBI-751260">
        <id>Q9BYR7</id>
        <label>KRTAP3-2</label>
    </interactant>
    <organismsDiffer>false</organismsDiffer>
    <experiments>3</experiments>
</comment>
<comment type="interaction">
    <interactant intactId="EBI-10173955">
        <id>A6NFR6-4</id>
    </interactant>
    <interactant intactId="EBI-945833">
        <id>Q7Z3S9</id>
        <label>NOTCH2NLA</label>
    </interactant>
    <organismsDiffer>false</organismsDiffer>
    <experiments>3</experiments>
</comment>
<comment type="subcellular location">
    <subcellularLocation>
        <location evidence="5">Membrane</location>
        <topology evidence="5">Single-pass membrane protein</topology>
    </subcellularLocation>
</comment>
<comment type="alternative products">
    <event type="alternative splicing"/>
    <isoform>
        <id>A6NFR6-1</id>
        <name>1</name>
        <sequence type="displayed"/>
    </isoform>
    <isoform>
        <id>A6NFR6-2</id>
        <name>2</name>
        <sequence type="described" ref="VSP_034519 VSP_034520"/>
    </isoform>
    <isoform>
        <id>A6NFR6-3</id>
        <name>3</name>
        <sequence type="described" ref="VSP_038832 VSP_038833"/>
    </isoform>
    <isoform>
        <id>A6NFR6-4</id>
        <name>4</name>
        <sequence type="described" ref="VSP_041195 VSP_041196"/>
    </isoform>
</comment>
<comment type="similarity">
    <text evidence="5">Belongs to the SPATA31 family.</text>
</comment>
<comment type="caution">
    <text evidence="5">Product of a dubious CDS prediction. May be a long non-coding RNA.</text>
</comment>
<comment type="sequence caution" evidence="5">
    <conflict type="erroneous initiation">
        <sequence resource="EMBL-CDS" id="AAI30443"/>
    </conflict>
    <text>Truncated N-terminus.</text>
</comment>
<comment type="sequence caution" evidence="5">
    <conflict type="erroneous initiation">
        <sequence resource="EMBL-CDS" id="AAI30445"/>
    </conflict>
    <text>Truncated N-terminus.</text>
</comment>
<dbReference type="EMBL" id="AC136604">
    <property type="status" value="NOT_ANNOTATED_CDS"/>
    <property type="molecule type" value="Genomic_DNA"/>
</dbReference>
<dbReference type="EMBL" id="BC130442">
    <property type="protein sequence ID" value="AAI30443.1"/>
    <property type="status" value="ALT_INIT"/>
    <property type="molecule type" value="mRNA"/>
</dbReference>
<dbReference type="EMBL" id="BC130444">
    <property type="protein sequence ID" value="AAI30445.1"/>
    <property type="status" value="ALT_INIT"/>
    <property type="molecule type" value="mRNA"/>
</dbReference>
<dbReference type="EMBL" id="BC144274">
    <property type="protein sequence ID" value="AAI44275.1"/>
    <property type="molecule type" value="mRNA"/>
</dbReference>
<dbReference type="EMBL" id="BC144275">
    <property type="protein sequence ID" value="AAI44276.1"/>
    <property type="molecule type" value="mRNA"/>
</dbReference>
<dbReference type="RefSeq" id="NP_001135778.1">
    <property type="nucleotide sequence ID" value="NM_001142306.2"/>
</dbReference>
<dbReference type="RefSeq" id="NP_001292317.1">
    <property type="nucleotide sequence ID" value="NM_001305388.1"/>
</dbReference>
<dbReference type="RefSeq" id="XP_011532836.1">
    <property type="nucleotide sequence ID" value="XM_011534534.2"/>
</dbReference>
<dbReference type="SMR" id="A6NFR6"/>
<dbReference type="BioGRID" id="130177">
    <property type="interactions" value="8"/>
</dbReference>
<dbReference type="IntAct" id="A6NFR6">
    <property type="interactions" value="6"/>
</dbReference>
<dbReference type="iPTMnet" id="A6NFR6"/>
<dbReference type="PhosphoSitePlus" id="A6NFR6"/>
<dbReference type="BioMuta" id="C5orf60"/>
<dbReference type="jPOST" id="A6NFR6"/>
<dbReference type="MassIVE" id="A6NFR6"/>
<dbReference type="PaxDb" id="9606-ENSP00000404583"/>
<dbReference type="PeptideAtlas" id="A6NFR6"/>
<dbReference type="ProteomicsDB" id="1070">
    <molecule id="A6NFR6-1"/>
</dbReference>
<dbReference type="ProteomicsDB" id="1071">
    <molecule id="A6NFR6-2"/>
</dbReference>
<dbReference type="ProteomicsDB" id="1072">
    <molecule id="A6NFR6-3"/>
</dbReference>
<dbReference type="ProteomicsDB" id="1073">
    <molecule id="A6NFR6-4"/>
</dbReference>
<dbReference type="DNASU" id="285679"/>
<dbReference type="Ensembl" id="ENST00000512899.5">
    <molecule id="A6NFR6-3"/>
    <property type="protein sequence ID" value="ENSP00000518891.1"/>
    <property type="gene ID" value="ENSG00000204661.10"/>
</dbReference>
<dbReference type="UCSC" id="uc063kop.1">
    <molecule id="A6NFR6-1"/>
    <property type="organism name" value="human"/>
</dbReference>
<dbReference type="AGR" id="HGNC:27753"/>
<dbReference type="GeneCards" id="SPATA31J1"/>
<dbReference type="HGNC" id="HGNC:27753">
    <property type="gene designation" value="SPATA31J1"/>
</dbReference>
<dbReference type="neXtProt" id="NX_A6NFR6"/>
<dbReference type="PharmGKB" id="PA165660205"/>
<dbReference type="eggNOG" id="ENOG502TE66">
    <property type="taxonomic scope" value="Eukaryota"/>
</dbReference>
<dbReference type="GeneTree" id="ENSGT00940000166214"/>
<dbReference type="InParanoid" id="A6NFR6"/>
<dbReference type="PAN-GO" id="A6NFR6">
    <property type="GO annotations" value="0 GO annotations based on evolutionary models"/>
</dbReference>
<dbReference type="PhylomeDB" id="A6NFR6"/>
<dbReference type="PathwayCommons" id="A6NFR6"/>
<dbReference type="SignaLink" id="A6NFR6"/>
<dbReference type="BioGRID-ORCS" id="285679">
    <property type="hits" value="21 hits in 998 CRISPR screens"/>
</dbReference>
<dbReference type="GenomeRNAi" id="285679"/>
<dbReference type="Pharos" id="A6NFR6">
    <property type="development level" value="Tdark"/>
</dbReference>
<dbReference type="PRO" id="PR:A6NFR6"/>
<dbReference type="Proteomes" id="UP000005640">
    <property type="component" value="Chromosome 5"/>
</dbReference>
<dbReference type="RNAct" id="A6NFR6">
    <property type="molecule type" value="protein"/>
</dbReference>
<dbReference type="GO" id="GO:0016020">
    <property type="term" value="C:membrane"/>
    <property type="evidence" value="ECO:0007669"/>
    <property type="project" value="UniProtKB-SubCell"/>
</dbReference>
<dbReference type="PANTHER" id="PTHR21859">
    <property type="entry name" value="ACROSOME-SPECIFIC PROTEIN"/>
    <property type="match status" value="1"/>
</dbReference>
<dbReference type="PANTHER" id="PTHR21859:SF58">
    <property type="entry name" value="SPERMATOGENESIS-ASSOCIATED PROTEIN 31E1"/>
    <property type="match status" value="1"/>
</dbReference>
<sequence length="353" mass="39250">MPRAQLPEDSSAVDMDILFPLDSVIGTELCPSPIPQIIHFVLFVVFSLVILIILRLYIPREPSSVPPREEDSENDQAEVGEWLRIGNKYITLKDYRILLKELENLEIYTFLSKKCLKKLSREGSSHHLPRQVRPGPVYKPAPARNHRPRGGRGKASPTSFHVSPRAPLAPLASMPSSVPKTSVESLGSPSSLSSSKPREPLCPLKHPSHQPPASTLSPNPTSSTESLGYLSSLSSSQPPEPLRPLKHPSHKPRGRSLPRRRNPGWVSWSDSMQADSETDTIICPMCKAPERSCPHTWWVPSSPRVIRGVGRCSDPNLGLSWRQEAARAWCHCTSSQFPFKHPNLPTHLPKASF</sequence>
<evidence type="ECO:0000255" key="1"/>
<evidence type="ECO:0000256" key="2">
    <source>
        <dbReference type="SAM" id="MobiDB-lite"/>
    </source>
</evidence>
<evidence type="ECO:0000269" key="3">
    <source>
    </source>
</evidence>
<evidence type="ECO:0000303" key="4">
    <source>
    </source>
</evidence>
<evidence type="ECO:0000305" key="5"/>
<evidence type="ECO:0000312" key="6">
    <source>
        <dbReference type="HGNC" id="HGNC:27753"/>
    </source>
</evidence>
<protein>
    <recommendedName>
        <fullName evidence="5">Putative protein SPATA31J1</fullName>
    </recommendedName>
</protein>
<keyword id="KW-0025">Alternative splicing</keyword>
<keyword id="KW-0472">Membrane</keyword>
<keyword id="KW-1267">Proteomics identification</keyword>
<keyword id="KW-1185">Reference proteome</keyword>
<keyword id="KW-0812">Transmembrane</keyword>
<keyword id="KW-1133">Transmembrane helix</keyword>